<comment type="function">
    <text evidence="1">NQR complex catalyzes the reduction of ubiquinone-1 to ubiquinol by two successive reactions, coupled with the transport of Na(+) ions from the cytoplasm to the periplasm. NqrA to NqrE are probably involved in the second step, the conversion of ubisemiquinone to ubiquinol.</text>
</comment>
<comment type="catalytic activity">
    <reaction evidence="1">
        <text>a ubiquinone + n Na(+)(in) + NADH + H(+) = a ubiquinol + n Na(+)(out) + NAD(+)</text>
        <dbReference type="Rhea" id="RHEA:47748"/>
        <dbReference type="Rhea" id="RHEA-COMP:9565"/>
        <dbReference type="Rhea" id="RHEA-COMP:9566"/>
        <dbReference type="ChEBI" id="CHEBI:15378"/>
        <dbReference type="ChEBI" id="CHEBI:16389"/>
        <dbReference type="ChEBI" id="CHEBI:17976"/>
        <dbReference type="ChEBI" id="CHEBI:29101"/>
        <dbReference type="ChEBI" id="CHEBI:57540"/>
        <dbReference type="ChEBI" id="CHEBI:57945"/>
        <dbReference type="EC" id="7.2.1.1"/>
    </reaction>
</comment>
<comment type="subunit">
    <text evidence="1">Composed of six subunits; NqrA, NqrB, NqrC, NqrD, NqrE and NqrF.</text>
</comment>
<comment type="subcellular location">
    <subcellularLocation>
        <location evidence="1">Cell inner membrane</location>
        <topology evidence="1">Multi-pass membrane protein</topology>
    </subcellularLocation>
</comment>
<comment type="similarity">
    <text evidence="1">Belongs to the NqrDE/RnfAE family.</text>
</comment>
<keyword id="KW-0997">Cell inner membrane</keyword>
<keyword id="KW-1003">Cell membrane</keyword>
<keyword id="KW-0406">Ion transport</keyword>
<keyword id="KW-0472">Membrane</keyword>
<keyword id="KW-0520">NAD</keyword>
<keyword id="KW-0915">Sodium</keyword>
<keyword id="KW-0739">Sodium transport</keyword>
<keyword id="KW-1278">Translocase</keyword>
<keyword id="KW-0812">Transmembrane</keyword>
<keyword id="KW-1133">Transmembrane helix</keyword>
<keyword id="KW-0813">Transport</keyword>
<keyword id="KW-0830">Ubiquinone</keyword>
<gene>
    <name evidence="1" type="primary">nqrE</name>
    <name type="ordered locus">VFMJ11_0749</name>
</gene>
<name>NQRE_ALIFM</name>
<accession>B5FBI4</accession>
<dbReference type="EC" id="7.2.1.1" evidence="1"/>
<dbReference type="EMBL" id="CP001139">
    <property type="protein sequence ID" value="ACH65405.1"/>
    <property type="molecule type" value="Genomic_DNA"/>
</dbReference>
<dbReference type="RefSeq" id="WP_005418136.1">
    <property type="nucleotide sequence ID" value="NC_011184.1"/>
</dbReference>
<dbReference type="SMR" id="B5FBI4"/>
<dbReference type="GeneID" id="54163384"/>
<dbReference type="KEGG" id="vfm:VFMJ11_0749"/>
<dbReference type="HOGENOM" id="CLU_095255_0_0_6"/>
<dbReference type="Proteomes" id="UP000001857">
    <property type="component" value="Chromosome I"/>
</dbReference>
<dbReference type="GO" id="GO:0009276">
    <property type="term" value="C:Gram-negative-bacterium-type cell wall"/>
    <property type="evidence" value="ECO:0007669"/>
    <property type="project" value="InterPro"/>
</dbReference>
<dbReference type="GO" id="GO:0005886">
    <property type="term" value="C:plasma membrane"/>
    <property type="evidence" value="ECO:0007669"/>
    <property type="project" value="UniProtKB-SubCell"/>
</dbReference>
<dbReference type="GO" id="GO:0016655">
    <property type="term" value="F:oxidoreductase activity, acting on NAD(P)H, quinone or similar compound as acceptor"/>
    <property type="evidence" value="ECO:0007669"/>
    <property type="project" value="UniProtKB-UniRule"/>
</dbReference>
<dbReference type="GO" id="GO:0022904">
    <property type="term" value="P:respiratory electron transport chain"/>
    <property type="evidence" value="ECO:0007669"/>
    <property type="project" value="InterPro"/>
</dbReference>
<dbReference type="GO" id="GO:0006814">
    <property type="term" value="P:sodium ion transport"/>
    <property type="evidence" value="ECO:0007669"/>
    <property type="project" value="UniProtKB-UniRule"/>
</dbReference>
<dbReference type="HAMAP" id="MF_00429">
    <property type="entry name" value="NqrE"/>
    <property type="match status" value="1"/>
</dbReference>
<dbReference type="InterPro" id="IPR003667">
    <property type="entry name" value="NqrDE/RnfAE"/>
</dbReference>
<dbReference type="InterPro" id="IPR050133">
    <property type="entry name" value="NqrDE/RnfAE_oxidrdctase"/>
</dbReference>
<dbReference type="InterPro" id="IPR010967">
    <property type="entry name" value="NqrE"/>
</dbReference>
<dbReference type="NCBIfam" id="TIGR01940">
    <property type="entry name" value="nqrE"/>
    <property type="match status" value="1"/>
</dbReference>
<dbReference type="PANTHER" id="PTHR30335">
    <property type="entry name" value="INTEGRAL MEMBRANE PROTEIN OF SOXR-REDUCING COMPLEX"/>
    <property type="match status" value="1"/>
</dbReference>
<dbReference type="PANTHER" id="PTHR30335:SF1">
    <property type="entry name" value="NA(+)-TRANSLOCATING NADH-QUINONE REDUCTASE SUBUNIT E"/>
    <property type="match status" value="1"/>
</dbReference>
<dbReference type="Pfam" id="PF02508">
    <property type="entry name" value="Rnf-Nqr"/>
    <property type="match status" value="1"/>
</dbReference>
<dbReference type="PIRSF" id="PIRSF006102">
    <property type="entry name" value="NQR_DE"/>
    <property type="match status" value="1"/>
</dbReference>
<protein>
    <recommendedName>
        <fullName evidence="1">Na(+)-translocating NADH-quinone reductase subunit E</fullName>
        <shortName evidence="1">Na(+)-NQR subunit E</shortName>
        <shortName evidence="1">Na(+)-translocating NQR subunit E</shortName>
        <ecNumber evidence="1">7.2.1.1</ecNumber>
    </recommendedName>
    <alternativeName>
        <fullName evidence="1">NQR complex subunit E</fullName>
    </alternativeName>
    <alternativeName>
        <fullName evidence="1">NQR-1 subunit E</fullName>
    </alternativeName>
</protein>
<reference key="1">
    <citation type="submission" date="2008-08" db="EMBL/GenBank/DDBJ databases">
        <title>Complete sequence of Vibrio fischeri strain MJ11.</title>
        <authorList>
            <person name="Mandel M.J."/>
            <person name="Stabb E.V."/>
            <person name="Ruby E.G."/>
            <person name="Ferriera S."/>
            <person name="Johnson J."/>
            <person name="Kravitz S."/>
            <person name="Beeson K."/>
            <person name="Sutton G."/>
            <person name="Rogers Y.-H."/>
            <person name="Friedman R."/>
            <person name="Frazier M."/>
            <person name="Venter J.C."/>
        </authorList>
    </citation>
    <scope>NUCLEOTIDE SEQUENCE [LARGE SCALE GENOMIC DNA]</scope>
    <source>
        <strain>MJ11</strain>
    </source>
</reference>
<evidence type="ECO:0000255" key="1">
    <source>
        <dbReference type="HAMAP-Rule" id="MF_00429"/>
    </source>
</evidence>
<proteinExistence type="inferred from homology"/>
<sequence length="198" mass="21506">MEHYISLLVKSIFIENMALSFFLGMCTFLAVSKKVKTSFGLGVAVVVVLTIAVPVNNLVYTYLLKENALVAGVDLTFLSFITFIGVIAALVQILEMILDRFFPPLYNALGIFLPLITVNCAIFGGVSFMVQRDYNFAESVVYGFGSGIGWMLAIVALAGIREKMKYSDVPPGLRGLGITFITVGLMALGFMSFSGVQL</sequence>
<feature type="chain" id="PRO_1000191706" description="Na(+)-translocating NADH-quinone reductase subunit E">
    <location>
        <begin position="1"/>
        <end position="198"/>
    </location>
</feature>
<feature type="transmembrane region" description="Helical" evidence="1">
    <location>
        <begin position="11"/>
        <end position="31"/>
    </location>
</feature>
<feature type="transmembrane region" description="Helical" evidence="1">
    <location>
        <begin position="39"/>
        <end position="59"/>
    </location>
</feature>
<feature type="transmembrane region" description="Helical" evidence="1">
    <location>
        <begin position="77"/>
        <end position="97"/>
    </location>
</feature>
<feature type="transmembrane region" description="Helical" evidence="1">
    <location>
        <begin position="110"/>
        <end position="130"/>
    </location>
</feature>
<feature type="transmembrane region" description="Helical" evidence="1">
    <location>
        <begin position="140"/>
        <end position="160"/>
    </location>
</feature>
<feature type="transmembrane region" description="Helical" evidence="1">
    <location>
        <begin position="176"/>
        <end position="196"/>
    </location>
</feature>
<organism>
    <name type="scientific">Aliivibrio fischeri (strain MJ11)</name>
    <name type="common">Vibrio fischeri</name>
    <dbReference type="NCBI Taxonomy" id="388396"/>
    <lineage>
        <taxon>Bacteria</taxon>
        <taxon>Pseudomonadati</taxon>
        <taxon>Pseudomonadota</taxon>
        <taxon>Gammaproteobacteria</taxon>
        <taxon>Vibrionales</taxon>
        <taxon>Vibrionaceae</taxon>
        <taxon>Aliivibrio</taxon>
    </lineage>
</organism>